<dbReference type="EC" id="2.6.1.1" evidence="4"/>
<dbReference type="EMBL" id="BA000030">
    <property type="protein sequence ID" value="BAC72619.1"/>
    <property type="molecule type" value="Genomic_DNA"/>
</dbReference>
<dbReference type="RefSeq" id="WP_010986326.1">
    <property type="nucleotide sequence ID" value="NZ_JZJK01000077.1"/>
</dbReference>
<dbReference type="SMR" id="Q82DR2"/>
<dbReference type="GeneID" id="41541990"/>
<dbReference type="KEGG" id="sma:SAVERM_4907"/>
<dbReference type="eggNOG" id="COG0436">
    <property type="taxonomic scope" value="Bacteria"/>
</dbReference>
<dbReference type="HOGENOM" id="CLU_017584_4_3_11"/>
<dbReference type="OrthoDB" id="9763453at2"/>
<dbReference type="Proteomes" id="UP000000428">
    <property type="component" value="Chromosome"/>
</dbReference>
<dbReference type="GO" id="GO:0005737">
    <property type="term" value="C:cytoplasm"/>
    <property type="evidence" value="ECO:0007669"/>
    <property type="project" value="UniProtKB-SubCell"/>
</dbReference>
<dbReference type="GO" id="GO:0004069">
    <property type="term" value="F:L-aspartate:2-oxoglutarate aminotransferase activity"/>
    <property type="evidence" value="ECO:0007669"/>
    <property type="project" value="UniProtKB-EC"/>
</dbReference>
<dbReference type="GO" id="GO:0030170">
    <property type="term" value="F:pyridoxal phosphate binding"/>
    <property type="evidence" value="ECO:0007669"/>
    <property type="project" value="InterPro"/>
</dbReference>
<dbReference type="GO" id="GO:0006520">
    <property type="term" value="P:amino acid metabolic process"/>
    <property type="evidence" value="ECO:0007669"/>
    <property type="project" value="InterPro"/>
</dbReference>
<dbReference type="GO" id="GO:0009058">
    <property type="term" value="P:biosynthetic process"/>
    <property type="evidence" value="ECO:0007669"/>
    <property type="project" value="InterPro"/>
</dbReference>
<dbReference type="CDD" id="cd00609">
    <property type="entry name" value="AAT_like"/>
    <property type="match status" value="1"/>
</dbReference>
<dbReference type="FunFam" id="3.40.640.10:FF:000033">
    <property type="entry name" value="Aspartate aminotransferase"/>
    <property type="match status" value="1"/>
</dbReference>
<dbReference type="Gene3D" id="3.90.1150.10">
    <property type="entry name" value="Aspartate Aminotransferase, domain 1"/>
    <property type="match status" value="1"/>
</dbReference>
<dbReference type="Gene3D" id="3.40.640.10">
    <property type="entry name" value="Type I PLP-dependent aspartate aminotransferase-like (Major domain)"/>
    <property type="match status" value="1"/>
</dbReference>
<dbReference type="InterPro" id="IPR004839">
    <property type="entry name" value="Aminotransferase_I/II_large"/>
</dbReference>
<dbReference type="InterPro" id="IPR050596">
    <property type="entry name" value="AspAT/PAT-like"/>
</dbReference>
<dbReference type="InterPro" id="IPR004838">
    <property type="entry name" value="NHTrfase_class1_PyrdxlP-BS"/>
</dbReference>
<dbReference type="InterPro" id="IPR015424">
    <property type="entry name" value="PyrdxlP-dep_Trfase"/>
</dbReference>
<dbReference type="InterPro" id="IPR015421">
    <property type="entry name" value="PyrdxlP-dep_Trfase_major"/>
</dbReference>
<dbReference type="InterPro" id="IPR015422">
    <property type="entry name" value="PyrdxlP-dep_Trfase_small"/>
</dbReference>
<dbReference type="PANTHER" id="PTHR46383">
    <property type="entry name" value="ASPARTATE AMINOTRANSFERASE"/>
    <property type="match status" value="1"/>
</dbReference>
<dbReference type="PANTHER" id="PTHR46383:SF1">
    <property type="entry name" value="ASPARTATE AMINOTRANSFERASE"/>
    <property type="match status" value="1"/>
</dbReference>
<dbReference type="Pfam" id="PF00155">
    <property type="entry name" value="Aminotran_1_2"/>
    <property type="match status" value="1"/>
</dbReference>
<dbReference type="PRINTS" id="PR00753">
    <property type="entry name" value="ACCSYNTHASE"/>
</dbReference>
<dbReference type="SUPFAM" id="SSF53383">
    <property type="entry name" value="PLP-dependent transferases"/>
    <property type="match status" value="1"/>
</dbReference>
<dbReference type="PROSITE" id="PS00105">
    <property type="entry name" value="AA_TRANSFER_CLASS_1"/>
    <property type="match status" value="1"/>
</dbReference>
<protein>
    <recommendedName>
        <fullName evidence="5">Aspartate aminotransferase</fullName>
        <shortName evidence="5">AAT</shortName>
        <shortName evidence="6">AspAT</shortName>
        <ecNumber evidence="4">2.6.1.1</ecNumber>
    </recommendedName>
</protein>
<organism>
    <name type="scientific">Streptomyces avermitilis (strain ATCC 31267 / DSM 46492 / JCM 5070 / NBRC 14893 / NCIMB 12804 / NRRL 8165 / MA-4680)</name>
    <dbReference type="NCBI Taxonomy" id="227882"/>
    <lineage>
        <taxon>Bacteria</taxon>
        <taxon>Bacillati</taxon>
        <taxon>Actinomycetota</taxon>
        <taxon>Actinomycetes</taxon>
        <taxon>Kitasatosporales</taxon>
        <taxon>Streptomycetaceae</taxon>
        <taxon>Streptomyces</taxon>
    </lineage>
</organism>
<evidence type="ECO:0000250" key="1">
    <source>
        <dbReference type="UniProtKB" id="P00509"/>
    </source>
</evidence>
<evidence type="ECO:0000250" key="2">
    <source>
        <dbReference type="UniProtKB" id="P58350"/>
    </source>
</evidence>
<evidence type="ECO:0000250" key="3">
    <source>
        <dbReference type="UniProtKB" id="Q56232"/>
    </source>
</evidence>
<evidence type="ECO:0000269" key="4">
    <source>
    </source>
</evidence>
<evidence type="ECO:0000303" key="5">
    <source>
    </source>
</evidence>
<evidence type="ECO:0000305" key="6"/>
<evidence type="ECO:0000312" key="7">
    <source>
        <dbReference type="EMBL" id="BAC72619.1"/>
    </source>
</evidence>
<gene>
    <name evidence="7" type="primary">aspC1</name>
    <name evidence="7" type="ordered locus">SAV_4907</name>
    <name evidence="7" type="ORF">SAVERM_4907</name>
</gene>
<feature type="chain" id="PRO_0000448264" description="Aspartate aminotransferase">
    <location>
        <begin position="1"/>
        <end position="408"/>
    </location>
</feature>
<feature type="binding site" evidence="1">
    <location>
        <position position="45"/>
    </location>
    <ligand>
        <name>L-aspartate</name>
        <dbReference type="ChEBI" id="CHEBI:29991"/>
    </ligand>
</feature>
<feature type="binding site" evidence="3">
    <location>
        <position position="134"/>
    </location>
    <ligand>
        <name>L-aspartate</name>
        <dbReference type="ChEBI" id="CHEBI:29991"/>
    </ligand>
</feature>
<feature type="binding site" evidence="3">
    <location>
        <position position="184"/>
    </location>
    <ligand>
        <name>L-aspartate</name>
        <dbReference type="ChEBI" id="CHEBI:29991"/>
    </ligand>
</feature>
<feature type="binding site" evidence="3">
    <location>
        <position position="382"/>
    </location>
    <ligand>
        <name>L-aspartate</name>
        <dbReference type="ChEBI" id="CHEBI:29991"/>
    </ligand>
</feature>
<feature type="modified residue" description="N6-(pyridoxal phosphate)lysine" evidence="2">
    <location>
        <position position="247"/>
    </location>
</feature>
<comment type="function">
    <text evidence="4">Catalyzes the reversible conversion of aspartate and 2-oxoglutarate to glutamate and oxaloacetate (PubMed:24302739). Does not have prephenate aminotransferase activity (PubMed:24302739).</text>
</comment>
<comment type="catalytic activity">
    <reaction evidence="4">
        <text>L-aspartate + 2-oxoglutarate = oxaloacetate + L-glutamate</text>
        <dbReference type="Rhea" id="RHEA:21824"/>
        <dbReference type="ChEBI" id="CHEBI:16452"/>
        <dbReference type="ChEBI" id="CHEBI:16810"/>
        <dbReference type="ChEBI" id="CHEBI:29985"/>
        <dbReference type="ChEBI" id="CHEBI:29991"/>
        <dbReference type="EC" id="2.6.1.1"/>
    </reaction>
</comment>
<comment type="cofactor">
    <cofactor evidence="3">
        <name>pyridoxal 5'-phosphate</name>
        <dbReference type="ChEBI" id="CHEBI:597326"/>
    </cofactor>
</comment>
<comment type="subunit">
    <text evidence="3">Homodimer.</text>
</comment>
<comment type="subcellular location">
    <subcellularLocation>
        <location evidence="6">Cytoplasm</location>
    </subcellularLocation>
</comment>
<comment type="similarity">
    <text evidence="6">Belongs to the class-I pyridoxal-phosphate-dependent aminotransferase family.</text>
</comment>
<name>AAT_STRAW</name>
<reference key="1">
    <citation type="journal article" date="2001" name="Proc. Natl. Acad. Sci. U.S.A.">
        <title>Genome sequence of an industrial microorganism Streptomyces avermitilis: deducing the ability of producing secondary metabolites.</title>
        <authorList>
            <person name="Omura S."/>
            <person name="Ikeda H."/>
            <person name="Ishikawa J."/>
            <person name="Hanamoto A."/>
            <person name="Takahashi C."/>
            <person name="Shinose M."/>
            <person name="Takahashi Y."/>
            <person name="Horikawa H."/>
            <person name="Nakazawa H."/>
            <person name="Osonoe T."/>
            <person name="Kikuchi H."/>
            <person name="Shiba T."/>
            <person name="Sakaki Y."/>
            <person name="Hattori M."/>
        </authorList>
    </citation>
    <scope>NUCLEOTIDE SEQUENCE [LARGE SCALE GENOMIC DNA]</scope>
    <source>
        <strain>ATCC 31267 / DSM 46492 / JCM 5070 / NBRC 14893 / NCIMB 12804 / NRRL 8165 / MA-4680</strain>
    </source>
</reference>
<reference key="2">
    <citation type="journal article" date="2003" name="Nat. Biotechnol.">
        <title>Complete genome sequence and comparative analysis of the industrial microorganism Streptomyces avermitilis.</title>
        <authorList>
            <person name="Ikeda H."/>
            <person name="Ishikawa J."/>
            <person name="Hanamoto A."/>
            <person name="Shinose M."/>
            <person name="Kikuchi H."/>
            <person name="Shiba T."/>
            <person name="Sakaki Y."/>
            <person name="Hattori M."/>
            <person name="Omura S."/>
        </authorList>
    </citation>
    <scope>NUCLEOTIDE SEQUENCE [LARGE SCALE GENOMIC DNA]</scope>
    <source>
        <strain>ATCC 31267 / DSM 46492 / JCM 5070 / NBRC 14893 / NCIMB 12804 / NRRL 8165 / MA-4680</strain>
    </source>
</reference>
<reference key="3">
    <citation type="journal article" date="2014" name="J. Biol. Chem.">
        <title>Three different classes of aminotransferases evolved prephenate aminotransferase functionality in arogenate-competent microorganisms.</title>
        <authorList>
            <person name="Graindorge M."/>
            <person name="Giustini C."/>
            <person name="Kraut A."/>
            <person name="Moyet L."/>
            <person name="Curien G."/>
            <person name="Matringe M."/>
        </authorList>
    </citation>
    <scope>FUNCTION</scope>
    <scope>CATALYTIC ACTIVITY</scope>
    <source>
        <strain>RCR2011</strain>
    </source>
</reference>
<accession>Q82DR2</accession>
<keyword id="KW-0032">Aminotransferase</keyword>
<keyword id="KW-0963">Cytoplasm</keyword>
<keyword id="KW-0663">Pyridoxal phosphate</keyword>
<keyword id="KW-1185">Reference proteome</keyword>
<keyword id="KW-0808">Transferase</keyword>
<proteinExistence type="evidence at protein level"/>
<sequence length="408" mass="43569">MSAATPPTERRVSARVGAISESATLAVDAKAKALKAAGRPVIGFGAGEPDFPTPDYIVQAAIEACSNPKYHRYTPAGGLPELKAAIAAKTLRDSGYEVDASQVLVTNGGKQAIYEAFAAILDPGDEVIVPAPYWTTYPESIRLAGGVPVDVVADETTGYRVSVEQLEAARTENTKVLLFVSPSNPTGAVYTREQIEEIGRWAAEKGLWVLTDEIYEHLVYGDAEFHSLPVVVPELADKCIVVNGVAKTYAMTGWRVGWVIGPKDVIKAATNLQSHATSNVSNVAQVAALAAVSGDLTAVAEMREAFDRRRKTIVRMLNEIGGVLCPEPEGAFYAYPSVKALLGKEIRGKRPQDTVELAALILEEAEVAVVPGEAFGTPGYLRLSYALGDEDLVEGVSRIQKLLSEAKD</sequence>